<proteinExistence type="evidence at protein level"/>
<reference key="1">
    <citation type="journal article" date="1999" name="J. Cell Biol.">
        <title>GBF1. A novel Golgi-associated bfa-resistant guanine nucleotide exchange factor that displays specificity for ADP-ribosylation factor 5.</title>
        <authorList>
            <person name="Claude A."/>
            <person name="Zhao B.-P."/>
            <person name="Kuziemsky C.E."/>
            <person name="Dahan S."/>
            <person name="Berger S.J."/>
            <person name="Yan J.-P."/>
            <person name="Armold A.D."/>
            <person name="Sullivan E.M."/>
            <person name="Melancon P."/>
        </authorList>
    </citation>
    <scope>NUCLEOTIDE SEQUENCE [MRNA]</scope>
    <scope>FUNCTION</scope>
    <source>
        <tissue>Ovary</tissue>
    </source>
</reference>
<reference key="2">
    <citation type="journal article" date="2007" name="J. Biol. Chem.">
        <title>Interactions between conserved domains within homodimers in the BIG1, BIG2, and GBF1 Arf guanine nucleotide exchange factors.</title>
        <authorList>
            <person name="Ramaen O."/>
            <person name="Joubert A."/>
            <person name="Simister P."/>
            <person name="Belgareh-Touze N."/>
            <person name="Olivares-Sanchez M.C."/>
            <person name="Zeeh J.C."/>
            <person name="Chantalat S."/>
            <person name="Golinelli-Cohen M.P."/>
            <person name="Jackson C.L."/>
            <person name="Biou V."/>
            <person name="Cherfils J."/>
        </authorList>
    </citation>
    <scope>SUBUNIT</scope>
    <scope>MUTAGENESIS OF LYS-91; GLU-130 AND ASP-541</scope>
</reference>
<reference key="3">
    <citation type="journal article" date="2009" name="Nat. Chem. Biol.">
        <title>Golgicide A reveals essential roles for GBF1 in Golgi assembly and function.</title>
        <authorList>
            <person name="Saenz J.B."/>
            <person name="Sun W.J."/>
            <person name="Chang J.W."/>
            <person name="Li J."/>
            <person name="Bursulaya B."/>
            <person name="Gray N.S."/>
            <person name="Haslam D.B."/>
        </authorList>
    </citation>
    <scope>FUNCTION</scope>
    <scope>ACTIVITY REGULATION</scope>
    <scope>MUTAGENESIS OF MET-830</scope>
</reference>
<accession>Q9R1D7</accession>
<sequence>MVDKNIYIIQGEINIVVGAIKRNARWSTHIPLDEERDPLLHSFSHLKEVLNSVTELSEIEPNVFLRPFLEVIRSEDTTGPITGLALTSVNKFLSYALIDPTHEGTAEGMENMADAVTHARFVGTDPASDEVVLMKILQVLRTLLLTPVGTHLTNESVCEIMQSCFRICFEMRLSELLRKSAEHTLVDMVQLLFTRLPQFKEEPKSYVGTNMKKLKMRAGGMSDSSKWKKQKRSPRPPRHMTRVTPGSELPAPNGATLSCNLTSGMPFIDVPSSISSASSEAASAVVSPCTDSGLELSSQTTSKEDLTDLEQAGSPRESTTTESGSNEIGVSDQLDPQEGSHVEKAQSASVESIPEVLEECTSPPDHSASVHDMDYVNPRGVRFTQSSQKEGTALVPYGLPCIRELFRFLISLTNPHDRHNSEGMIHMGLHLLTVALESAPVAQCQTLLGLIKDEMCRHLFQLLSVERLNLYAASLRVCFLLFESMREHLKFQLEMYMKKLMEIITVENPKMPYEMKEMALEAIVQLWRIPSFVTELYINYDCDYYCANLFEDLTKLLSKNAFPVSGQLYTTHLLSLDALLTVIDSTEAHCQAKVLNTLTQQEKKETSRPSYEAVDSTQEANSTERATIDGKATGMASDALGLHLQSGGWLSAEHGKPRCNDVEEAGDSGADKKFTRKPPRFSCLLPDPRELIEIKNKKKLLITGTEQFNQKPKKGIQFLQEKGLLTIPMDNTEVAQWLRENPRLDKKMIGEFVSDRKNIDLLESFVSTFSFQGLRLDEALRLYLEAFRLPGEAPVIHRLLEAFTEHWRSCNGSPFANSDACFALAYAVIMLNTDQHNHNVRKQNVPMTLEEFRKNLKGVNGGKDFEQDILEDMYHAIKNEEIVMPEEQTGLVRENYVWSVLLHRGATPEGIFLRVPPGSYDLDLFTMTWGPTIAALSYVFDKSIEETIIQKAISGFRKCAMISAHYGLSDVFDNLIISLCKFTALSSESIENLPTVFGSNPKAHIAAKTVFHLAHRHGDILREGWKNIMEAVLQLFRAQLLPQAMVEVEDFVDPNGKISLQREEMPSNRGESSVLSFVSWLTLSGPEQSSVRGPSTENQEAKRVALDCIKQCDPEKMITESKFLQLESLQELMKALVSVTADEETYDEEDAAFCLEMLLRIVLENRDRVGCVWQTVRDHLYHLCVQAQDFCFLVERAVVGLLRLAIRLLRREEISGQVLLSLRILLLMKPSVLSRVSHQVAYGLHELLKTNAANIHSGDDWATLFTLLECIGSGVKPPDALQATARADAPDAGAQSDSELPSYHQNDVSLDRGYTSDSEVYTDHGRPGKIHRSATDADMVNSGWLVVGKDDIDNSKAGAGLSRPSPSPLVNQYSLTVGLDLGPHDTKSLLKCVESLSFIVRDAAHITPDNFELCVKTLRIFVEASLNGGCKSQDKRGKSHKYDSKGNRFKKKPKEGSVLRRPRTSSQHGTRGGHSDEEEDEGVPASYHTVSLQVSQDLLDLMHTLHTRAASIYSSWAEEQRHLESGGRKIEADSRTLWAHCWCPLLQGIACLCCDARRQVRMQALTYLQRALLVHDLQKLDALEWESCFNKVLFPLLTKLLENISPADVGGMEETRMRASTLLSKVFLQHLSPLLSLSTFAALWLTILDFMDKYMHAGSSDLLSEAIPESLKNMLLVMDTAEIFHSADARGGSPSALWEITWERIDCFLPHLRDELFKQTVIQDPMPTEPHSQNALASTHLTPAAGDPGHLPSPEIPSEVGACDSEKPEGTRATSSSSPGSPVASSPSRLSPSPEGPPPLAQPPLILQPLTSPLQVGVPPMALPIILNPALIEATSPVPLLSTPRPTDPIPTSEVN</sequence>
<evidence type="ECO:0000250" key="1">
    <source>
        <dbReference type="UniProtKB" id="Q92538"/>
    </source>
</evidence>
<evidence type="ECO:0000255" key="2">
    <source>
        <dbReference type="PROSITE-ProRule" id="PRU00189"/>
    </source>
</evidence>
<evidence type="ECO:0000256" key="3">
    <source>
        <dbReference type="SAM" id="MobiDB-lite"/>
    </source>
</evidence>
<evidence type="ECO:0000269" key="4">
    <source>
    </source>
</evidence>
<evidence type="ECO:0000269" key="5">
    <source>
    </source>
</evidence>
<evidence type="ECO:0000269" key="6">
    <source>
    </source>
</evidence>
<evidence type="ECO:0000305" key="7"/>
<evidence type="ECO:0000305" key="8">
    <source>
    </source>
</evidence>
<gene>
    <name type="primary">GBF1</name>
</gene>
<comment type="function">
    <text evidence="1 4 6">Guanine-nucleotide exchange factor (GEF) for members of the Arf family of small GTPases involved in trafficking in the early secretory pathway; its GEF activity initiates the coating of nascent vesicles via the localized generation of activated ARFs through replacement of GDP with GTP. Recruitment to cis-Golgi membranes requires membrane association of Arf-GDP and can be regulated by ARF1, ARF3, ARF4 and ARF5. Involved in the recruitment of the COPI coat complex to cellular membranes such as the endoplasmic reticulum exit sites (ERES), and the endoplasmic reticulum-Golgi intermediate (ERGIC) and cis-Golgi compartments implicating ARF1 activation. Involved in COPI vesicle-dependent retrograde transport from the ERGIC and cis-Golgi compartments to the endoplasmic reticulum (ER). Involved in the trans-Golgi network recruitment of GGA1, GGA2, GGA3, BIG1, BIG2, and the AP-1 adaptor protein complex related to chlathrin-dependent transport; the function requires its GEF activity (probably at least in part on ARF4 and ARF5). Has GEF activity towards ARF1 (By similarity). Has in vitro GEF activity towards ARF5 (PubMed:10402461). Involved in the processing of PSAP. Required for the assembly of the Golgi apparatus (PubMed:19182783). The AMPK-phosphorylated form is involved in Golgi disassembly during mitotis and under stress conditions. May be involved in the COPI vesicle-dependent recruitment of PNPLA2 to lipid droplets. In neutrophils, involved in G protein-coupled receptor (GPCR)-mediated chemotaxis und superoxide production. Proposed to be recruited by phosphatidylinositol-phosphates generated upon GPCR stimulation to the leading edge where it recruits and activates ARF1, and is involved in recruitment of GIT2 and the NADPH oxidase complex (By similarity). Plays a role in maintaining mitochondrial morphology (By similarity).</text>
</comment>
<comment type="activity regulation">
    <text evidence="1 6">Inhibited by brefeldin A (BFA) (By similarity). Inhibited by golgicide A (GCA) (PubMed:19182783).</text>
</comment>
<comment type="subunit">
    <text evidence="1 5 8">Can form homodimers and probably homotetramers (PubMed:17640864). Interacts with COPG1; the interaction is independent on ARF1 activation. Interacts with ARF1, ARF3, ARF4 and ARF5. Interacts with RAB1B (GTP-bound form); required for GBF1 membrane association. Interacts with GGA1, GGA2 and GGA3. Interacts with USO1. Interacts (via SEC7 domain) with PNPLA2 (via C-terminus); the interaction is direct. Can form homodimers and probably homotetramers. Interacts with COPG1; the interaction is independent on ARF1 activation. Interacts with ARF1, ARF3, ARF4 and ARF5. Interacts with RAB1B (GTP-bound form); required for GBF1 membrane association. Interacts with GGA1, GGA2 and GGA3. Interacts with USO1. Interacts (via SEC7 domain) with PNPLA2 (via C-terminus); the interaction is direct. Interacts with ARMH3 (By similarity).</text>
</comment>
<comment type="subcellular location">
    <subcellularLocation>
        <location evidence="1">Golgi apparatus</location>
        <location evidence="1">cis-Golgi network</location>
    </subcellularLocation>
    <subcellularLocation>
        <location evidence="1">Endoplasmic reticulum-Golgi intermediate compartment</location>
    </subcellularLocation>
    <subcellularLocation>
        <location evidence="1">Golgi apparatus</location>
        <location evidence="1">trans-Golgi network</location>
    </subcellularLocation>
    <subcellularLocation>
        <location evidence="1">Golgi apparatus</location>
    </subcellularLocation>
    <subcellularLocation>
        <location evidence="1">Cytoplasm</location>
    </subcellularLocation>
    <subcellularLocation>
        <location evidence="1">Lipid droplet</location>
    </subcellularLocation>
    <subcellularLocation>
        <location>Membrane</location>
        <topology evidence="7">Peripheral membrane protein</topology>
    </subcellularLocation>
    <text evidence="1">Cycles rapidly on and off early Golgi membranes. Stabilized on membranes when complexed with ARF1-GDP and is released from both ARF1 and membranes after it catalyzes GDP displacement and ARF1 binds GTP. Continuous cycles of recruitment and dissociation of GBF1 to membranes are required for sustained ARF activation and COP I recruitment (By similarity).</text>
</comment>
<comment type="domain">
    <text evidence="5 8">The DCB (dimerization and cyclophilin-binding) and HUS (homology upstream of Sec7) domains are necessary for dimerization. The DCB domain is proposed to support constitutive homodimerization; the HUS domain interacts with the DCB domain which may occur intramolecular or intermolecular.</text>
</comment>
<name>GBF1_CRIGR</name>
<dbReference type="EMBL" id="AF127523">
    <property type="protein sequence ID" value="AAD45661.1"/>
    <property type="molecule type" value="mRNA"/>
</dbReference>
<dbReference type="RefSeq" id="NP_001233615.1">
    <property type="nucleotide sequence ID" value="NM_001246686.1"/>
</dbReference>
<dbReference type="SMR" id="Q9R1D7"/>
<dbReference type="PaxDb" id="10029-NP_001233615.1"/>
<dbReference type="GeneID" id="100689421"/>
<dbReference type="KEGG" id="cge:100689421"/>
<dbReference type="CTD" id="8729"/>
<dbReference type="eggNOG" id="KOG0928">
    <property type="taxonomic scope" value="Eukaryota"/>
</dbReference>
<dbReference type="OrthoDB" id="10258608at2759"/>
<dbReference type="Proteomes" id="UP000694386">
    <property type="component" value="Unplaced"/>
</dbReference>
<dbReference type="Proteomes" id="UP001108280">
    <property type="component" value="Chromosome 3"/>
</dbReference>
<dbReference type="GO" id="GO:0005793">
    <property type="term" value="C:endoplasmic reticulum-Golgi intermediate compartment"/>
    <property type="evidence" value="ECO:0007669"/>
    <property type="project" value="UniProtKB-SubCell"/>
</dbReference>
<dbReference type="GO" id="GO:0005794">
    <property type="term" value="C:Golgi apparatus"/>
    <property type="evidence" value="ECO:0007669"/>
    <property type="project" value="UniProtKB-SubCell"/>
</dbReference>
<dbReference type="GO" id="GO:0005811">
    <property type="term" value="C:lipid droplet"/>
    <property type="evidence" value="ECO:0007669"/>
    <property type="project" value="UniProtKB-SubCell"/>
</dbReference>
<dbReference type="GO" id="GO:0016020">
    <property type="term" value="C:membrane"/>
    <property type="evidence" value="ECO:0007669"/>
    <property type="project" value="UniProtKB-SubCell"/>
</dbReference>
<dbReference type="GO" id="GO:0005085">
    <property type="term" value="F:guanyl-nucleotide exchange factor activity"/>
    <property type="evidence" value="ECO:0007669"/>
    <property type="project" value="UniProtKB-KW"/>
</dbReference>
<dbReference type="GO" id="GO:0008289">
    <property type="term" value="F:lipid binding"/>
    <property type="evidence" value="ECO:0007669"/>
    <property type="project" value="UniProtKB-KW"/>
</dbReference>
<dbReference type="GO" id="GO:0015031">
    <property type="term" value="P:protein transport"/>
    <property type="evidence" value="ECO:0007669"/>
    <property type="project" value="UniProtKB-KW"/>
</dbReference>
<dbReference type="GO" id="GO:0032012">
    <property type="term" value="P:regulation of ARF protein signal transduction"/>
    <property type="evidence" value="ECO:0007669"/>
    <property type="project" value="InterPro"/>
</dbReference>
<dbReference type="GO" id="GO:0016192">
    <property type="term" value="P:vesicle-mediated transport"/>
    <property type="evidence" value="ECO:0007669"/>
    <property type="project" value="UniProtKB-ARBA"/>
</dbReference>
<dbReference type="CDD" id="cd00171">
    <property type="entry name" value="Sec7"/>
    <property type="match status" value="1"/>
</dbReference>
<dbReference type="FunFam" id="1.10.1000.11:FF:000007">
    <property type="entry name" value="Golgi-specific brefeldin A-resistance guanine nucleotide exchange factor 1"/>
    <property type="match status" value="1"/>
</dbReference>
<dbReference type="FunFam" id="1.10.220.20:FF:000004">
    <property type="entry name" value="Golgi-specific brefeldin A-resistance guanine nucleotide exchange factor 1"/>
    <property type="match status" value="1"/>
</dbReference>
<dbReference type="Gene3D" id="1.10.220.20">
    <property type="match status" value="1"/>
</dbReference>
<dbReference type="Gene3D" id="1.10.1000.11">
    <property type="entry name" value="Arf Nucleotide-binding Site Opener,domain 2"/>
    <property type="match status" value="1"/>
</dbReference>
<dbReference type="InterPro" id="IPR016024">
    <property type="entry name" value="ARM-type_fold"/>
</dbReference>
<dbReference type="InterPro" id="IPR056604">
    <property type="entry name" value="GBF1-like_TPR"/>
</dbReference>
<dbReference type="InterPro" id="IPR032691">
    <property type="entry name" value="Mon2/Sec7/BIG1-like_HUS"/>
</dbReference>
<dbReference type="InterPro" id="IPR023394">
    <property type="entry name" value="Sec7_C_sf"/>
</dbReference>
<dbReference type="InterPro" id="IPR000904">
    <property type="entry name" value="Sec7_dom"/>
</dbReference>
<dbReference type="InterPro" id="IPR035999">
    <property type="entry name" value="Sec7_dom_sf"/>
</dbReference>
<dbReference type="PANTHER" id="PTHR10663:SF388">
    <property type="entry name" value="GOLGI-SPECIFIC BREFELDIN A-RESISTANCE GUANINE NUCLEOTIDE EXCHANGE FACTOR 1"/>
    <property type="match status" value="1"/>
</dbReference>
<dbReference type="PANTHER" id="PTHR10663">
    <property type="entry name" value="GUANYL-NUCLEOTIDE EXCHANGE FACTOR"/>
    <property type="match status" value="1"/>
</dbReference>
<dbReference type="Pfam" id="PF01369">
    <property type="entry name" value="Sec7"/>
    <property type="match status" value="1"/>
</dbReference>
<dbReference type="Pfam" id="PF12783">
    <property type="entry name" value="Sec7-like_HUS"/>
    <property type="match status" value="1"/>
</dbReference>
<dbReference type="Pfam" id="PF23325">
    <property type="entry name" value="TPR_28"/>
    <property type="match status" value="1"/>
</dbReference>
<dbReference type="SMART" id="SM00222">
    <property type="entry name" value="Sec7"/>
    <property type="match status" value="1"/>
</dbReference>
<dbReference type="SUPFAM" id="SSF48371">
    <property type="entry name" value="ARM repeat"/>
    <property type="match status" value="1"/>
</dbReference>
<dbReference type="SUPFAM" id="SSF48425">
    <property type="entry name" value="Sec7 domain"/>
    <property type="match status" value="1"/>
</dbReference>
<dbReference type="PROSITE" id="PS50190">
    <property type="entry name" value="SEC7"/>
    <property type="match status" value="1"/>
</dbReference>
<keyword id="KW-0963">Cytoplasm</keyword>
<keyword id="KW-0333">Golgi apparatus</keyword>
<keyword id="KW-0344">Guanine-nucleotide releasing factor</keyword>
<keyword id="KW-0551">Lipid droplet</keyword>
<keyword id="KW-0446">Lipid-binding</keyword>
<keyword id="KW-0472">Membrane</keyword>
<keyword id="KW-0597">Phosphoprotein</keyword>
<keyword id="KW-0653">Protein transport</keyword>
<keyword id="KW-0813">Transport</keyword>
<protein>
    <recommendedName>
        <fullName>Golgi-specific brefeldin A-resistance guanine nucleotide exchange factor 1</fullName>
        <shortName>BFA-resistant GEF 1</shortName>
    </recommendedName>
</protein>
<feature type="chain" id="PRO_0000120209" description="Golgi-specific brefeldin A-resistance guanine nucleotide exchange factor 1">
    <location>
        <begin position="1"/>
        <end position="1856"/>
    </location>
</feature>
<feature type="domain" description="SEC7" evidence="2">
    <location>
        <begin position="690"/>
        <end position="880"/>
    </location>
</feature>
<feature type="region of interest" description="Interaction with RAB1B" evidence="1">
    <location>
        <begin position="1"/>
        <end position="378"/>
    </location>
</feature>
<feature type="region of interest" description="DCB (dimerization and cyclophiln-binding); DCB:DCB domain and DCB:HUS domain interaction" evidence="5">
    <location>
        <begin position="1"/>
        <end position="211"/>
    </location>
</feature>
<feature type="region of interest" description="Disordered" evidence="3">
    <location>
        <begin position="215"/>
        <end position="256"/>
    </location>
</feature>
<feature type="region of interest" description="Disordered" evidence="3">
    <location>
        <begin position="291"/>
        <end position="370"/>
    </location>
</feature>
<feature type="region of interest" description="HUS (homology upstream of Sec7); DCB:HUS domain interaction" evidence="5">
    <location>
        <begin position="528"/>
        <end position="548"/>
    </location>
</feature>
<feature type="region of interest" description="Disordered" evidence="3">
    <location>
        <begin position="601"/>
        <end position="626"/>
    </location>
</feature>
<feature type="region of interest" description="Phosphatidylinositol-phosphate binding; required for translocation to the leading edge and for ARF1 activation upon GPCR signaling" evidence="1">
    <location>
        <begin position="884"/>
        <end position="1370"/>
    </location>
</feature>
<feature type="region of interest" description="Disordered" evidence="3">
    <location>
        <begin position="1284"/>
        <end position="1333"/>
    </location>
</feature>
<feature type="region of interest" description="Disordered" evidence="3">
    <location>
        <begin position="1430"/>
        <end position="1484"/>
    </location>
</feature>
<feature type="region of interest" description="Disordered" evidence="3">
    <location>
        <begin position="1739"/>
        <end position="1806"/>
    </location>
</feature>
<feature type="region of interest" description="Disordered" evidence="3">
    <location>
        <begin position="1837"/>
        <end position="1856"/>
    </location>
</feature>
<feature type="compositionally biased region" description="Basic residues" evidence="3">
    <location>
        <begin position="227"/>
        <end position="241"/>
    </location>
</feature>
<feature type="compositionally biased region" description="Polar residues" evidence="3">
    <location>
        <begin position="316"/>
        <end position="328"/>
    </location>
</feature>
<feature type="compositionally biased region" description="Polar residues" evidence="3">
    <location>
        <begin position="615"/>
        <end position="625"/>
    </location>
</feature>
<feature type="compositionally biased region" description="Low complexity" evidence="3">
    <location>
        <begin position="1284"/>
        <end position="1294"/>
    </location>
</feature>
<feature type="compositionally biased region" description="Polar residues" evidence="3">
    <location>
        <begin position="1295"/>
        <end position="1308"/>
    </location>
</feature>
<feature type="compositionally biased region" description="Basic and acidic residues" evidence="3">
    <location>
        <begin position="1432"/>
        <end position="1446"/>
    </location>
</feature>
<feature type="compositionally biased region" description="Low complexity" evidence="3">
    <location>
        <begin position="1775"/>
        <end position="1793"/>
    </location>
</feature>
<feature type="modified residue" description="Phosphoserine" evidence="1">
    <location>
        <position position="349"/>
    </location>
</feature>
<feature type="modified residue" description="Phosphoserine" evidence="1">
    <location>
        <position position="352"/>
    </location>
</feature>
<feature type="modified residue" description="Phosphothreonine" evidence="1">
    <location>
        <position position="505"/>
    </location>
</feature>
<feature type="modified residue" description="Phosphoserine" evidence="1">
    <location>
        <position position="1296"/>
    </location>
</feature>
<feature type="modified residue" description="Phosphotyrosine" evidence="1">
    <location>
        <position position="1314"/>
    </location>
</feature>
<feature type="modified residue" description="Phosphoserine" evidence="1">
    <location>
        <position position="1316"/>
    </location>
</feature>
<feature type="modified residue" description="Phosphoserine" evidence="1">
    <location>
        <position position="1318"/>
    </location>
</feature>
<feature type="modified residue" description="Phosphoserine" evidence="1">
    <location>
        <position position="1333"/>
    </location>
</feature>
<feature type="modified residue" description="Phosphothreonine; by AMPK" evidence="1">
    <location>
        <position position="1335"/>
    </location>
</feature>
<feature type="modified residue" description="Phosphoserine" evidence="1">
    <location>
        <position position="1475"/>
    </location>
</feature>
<feature type="modified residue" description="Phosphoserine" evidence="1">
    <location>
        <position position="1781"/>
    </location>
</feature>
<feature type="mutagenesis site" description="Disrupts DCB:DCB domain interaction; decreases DCB:HUS domain interaction." evidence="5">
    <original>K</original>
    <variation>A</variation>
    <location>
        <position position="91"/>
    </location>
</feature>
<feature type="mutagenesis site" description="Disrupts DCB:DCB domain and DCB:HUS domain interaction." evidence="5">
    <original>E</original>
    <variation>A</variation>
    <location>
        <position position="130"/>
    </location>
</feature>
<feature type="mutagenesis site" description="Disrupts DCB:HUS domain interaction." evidence="5">
    <original>D</original>
    <variation>A</variation>
    <location>
        <position position="541"/>
    </location>
</feature>
<feature type="mutagenesis site" description="Confers GCA tolerance." evidence="6">
    <original>M</original>
    <variation>L</variation>
    <location>
        <position position="830"/>
    </location>
</feature>
<organism>
    <name type="scientific">Cricetulus griseus</name>
    <name type="common">Chinese hamster</name>
    <name type="synonym">Cricetulus barabensis griseus</name>
    <dbReference type="NCBI Taxonomy" id="10029"/>
    <lineage>
        <taxon>Eukaryota</taxon>
        <taxon>Metazoa</taxon>
        <taxon>Chordata</taxon>
        <taxon>Craniata</taxon>
        <taxon>Vertebrata</taxon>
        <taxon>Euteleostomi</taxon>
        <taxon>Mammalia</taxon>
        <taxon>Eutheria</taxon>
        <taxon>Euarchontoglires</taxon>
        <taxon>Glires</taxon>
        <taxon>Rodentia</taxon>
        <taxon>Myomorpha</taxon>
        <taxon>Muroidea</taxon>
        <taxon>Cricetidae</taxon>
        <taxon>Cricetinae</taxon>
        <taxon>Cricetulus</taxon>
    </lineage>
</organism>